<sequence length="315" mass="34043">MPREDRATWKSNYFLKIIQLLDDYPKCFIVGADNVGSKQMQQIRMSLRGKAVVLMGKNTMMRKAIRGHLENNSALEKLLPHIKGNVGFVFTKEDLAEVRDMLLANKVPASARAGAIAPCDVTVPAQNTGLGPEKTSFFQALGITTKISRGTIEILSDVQLIKTGDKVGASEATLLNMLNISPFSFGLIIQQVYDNGSIYSPEVLDITEDALRARFLEGVRNIASVCLQIGYPTVASVPHSVVNGYKRVLALAVETDYSFPLADKVKAFLADPSAFVVAAPVAETAAAPAASAAPAKEEKEESEESDDDMGFGLFD</sequence>
<comment type="function">
    <text>Ribosomal protein P0 is the functional equivalent of E.coli protein L10.</text>
</comment>
<comment type="subunit">
    <text evidence="1">P0 forms a pentameric complex by interaction with dimers of P1 and P2.</text>
</comment>
<comment type="PTM">
    <text evidence="1">Phosphorylated.</text>
</comment>
<comment type="similarity">
    <text evidence="3">Belongs to the universal ribosomal protein uL10 family.</text>
</comment>
<gene>
    <name type="primary">RPLP0</name>
</gene>
<name>RLA0_LITSY</name>
<dbReference type="EMBL" id="AF176302">
    <property type="protein sequence ID" value="AAG09233.1"/>
    <property type="molecule type" value="mRNA"/>
</dbReference>
<dbReference type="SMR" id="Q9DG68"/>
<dbReference type="GO" id="GO:0022625">
    <property type="term" value="C:cytosolic large ribosomal subunit"/>
    <property type="evidence" value="ECO:0007669"/>
    <property type="project" value="TreeGrafter"/>
</dbReference>
<dbReference type="GO" id="GO:0070180">
    <property type="term" value="F:large ribosomal subunit rRNA binding"/>
    <property type="evidence" value="ECO:0007669"/>
    <property type="project" value="TreeGrafter"/>
</dbReference>
<dbReference type="GO" id="GO:0003735">
    <property type="term" value="F:structural constituent of ribosome"/>
    <property type="evidence" value="ECO:0007669"/>
    <property type="project" value="TreeGrafter"/>
</dbReference>
<dbReference type="GO" id="GO:0002181">
    <property type="term" value="P:cytoplasmic translation"/>
    <property type="evidence" value="ECO:0007669"/>
    <property type="project" value="TreeGrafter"/>
</dbReference>
<dbReference type="GO" id="GO:0000027">
    <property type="term" value="P:ribosomal large subunit assembly"/>
    <property type="evidence" value="ECO:0007669"/>
    <property type="project" value="TreeGrafter"/>
</dbReference>
<dbReference type="CDD" id="cd05795">
    <property type="entry name" value="Ribosomal_P0_L10e"/>
    <property type="match status" value="1"/>
</dbReference>
<dbReference type="FunFam" id="3.30.70.1730:FF:000002">
    <property type="entry name" value="60S acidic ribosomal protein P0"/>
    <property type="match status" value="1"/>
</dbReference>
<dbReference type="FunFam" id="3.90.105.20:FF:000001">
    <property type="entry name" value="60S acidic ribosomal protein P0"/>
    <property type="match status" value="1"/>
</dbReference>
<dbReference type="Gene3D" id="3.30.70.1730">
    <property type="match status" value="1"/>
</dbReference>
<dbReference type="Gene3D" id="3.90.105.20">
    <property type="match status" value="1"/>
</dbReference>
<dbReference type="InterPro" id="IPR050323">
    <property type="entry name" value="Ribosomal_protein_uL10"/>
</dbReference>
<dbReference type="InterPro" id="IPR001790">
    <property type="entry name" value="Ribosomal_uL10"/>
</dbReference>
<dbReference type="InterPro" id="IPR040637">
    <property type="entry name" value="Ribosomal_uL10-like_insert"/>
</dbReference>
<dbReference type="InterPro" id="IPR043164">
    <property type="entry name" value="Ribosomal_uL10-like_insert_sf"/>
</dbReference>
<dbReference type="InterPro" id="IPR043141">
    <property type="entry name" value="Ribosomal_uL10-like_sf"/>
</dbReference>
<dbReference type="InterPro" id="IPR030670">
    <property type="entry name" value="uL10_eukaryotes"/>
</dbReference>
<dbReference type="PANTHER" id="PTHR45699">
    <property type="entry name" value="60S ACIDIC RIBOSOMAL PROTEIN P0"/>
    <property type="match status" value="1"/>
</dbReference>
<dbReference type="PANTHER" id="PTHR45699:SF3">
    <property type="entry name" value="LARGE RIBOSOMAL SUBUNIT PROTEIN UL10"/>
    <property type="match status" value="1"/>
</dbReference>
<dbReference type="Pfam" id="PF00428">
    <property type="entry name" value="Ribosomal_60s"/>
    <property type="match status" value="1"/>
</dbReference>
<dbReference type="Pfam" id="PF00466">
    <property type="entry name" value="Ribosomal_L10"/>
    <property type="match status" value="1"/>
</dbReference>
<dbReference type="Pfam" id="PF17777">
    <property type="entry name" value="RL10P_insert"/>
    <property type="match status" value="1"/>
</dbReference>
<dbReference type="PIRSF" id="PIRSF039087">
    <property type="entry name" value="L10E"/>
    <property type="match status" value="1"/>
</dbReference>
<dbReference type="SUPFAM" id="SSF160369">
    <property type="entry name" value="Ribosomal protein L10-like"/>
    <property type="match status" value="1"/>
</dbReference>
<reference key="1">
    <citation type="submission" date="1999-08" db="EMBL/GenBank/DDBJ databases">
        <title>Upregulation of an acidic ribosomal phosphoprotein (P0) gene under freezing and anoxia stresses in freeze tolerant wood frog Rana sylvatica.</title>
        <authorList>
            <person name="Wu S.-B."/>
            <person name="Storey K.B."/>
        </authorList>
    </citation>
    <scope>NUCLEOTIDE SEQUENCE [MRNA]</scope>
</reference>
<protein>
    <recommendedName>
        <fullName evidence="3">Large ribosomal subunit protein uL10</fullName>
    </recommendedName>
    <alternativeName>
        <fullName>60S acidic ribosomal protein P0</fullName>
    </alternativeName>
    <alternativeName>
        <fullName>60S ribosomal protein L10E</fullName>
    </alternativeName>
</protein>
<evidence type="ECO:0000250" key="1"/>
<evidence type="ECO:0000256" key="2">
    <source>
        <dbReference type="SAM" id="MobiDB-lite"/>
    </source>
</evidence>
<evidence type="ECO:0000305" key="3"/>
<feature type="chain" id="PRO_0000154765" description="Large ribosomal subunit protein uL10">
    <location>
        <begin position="1"/>
        <end position="315"/>
    </location>
</feature>
<feature type="region of interest" description="Disordered" evidence="2">
    <location>
        <begin position="285"/>
        <end position="315"/>
    </location>
</feature>
<feature type="compositionally biased region" description="Low complexity" evidence="2">
    <location>
        <begin position="285"/>
        <end position="294"/>
    </location>
</feature>
<feature type="compositionally biased region" description="Acidic residues" evidence="2">
    <location>
        <begin position="300"/>
        <end position="309"/>
    </location>
</feature>
<proteinExistence type="evidence at transcript level"/>
<accession>Q9DG68</accession>
<keyword id="KW-0597">Phosphoprotein</keyword>
<keyword id="KW-0687">Ribonucleoprotein</keyword>
<keyword id="KW-0689">Ribosomal protein</keyword>
<organism>
    <name type="scientific">Lithobates sylvaticus</name>
    <name type="common">Wood frog</name>
    <name type="synonym">Rana sylvatica</name>
    <dbReference type="NCBI Taxonomy" id="45438"/>
    <lineage>
        <taxon>Eukaryota</taxon>
        <taxon>Metazoa</taxon>
        <taxon>Chordata</taxon>
        <taxon>Craniata</taxon>
        <taxon>Vertebrata</taxon>
        <taxon>Euteleostomi</taxon>
        <taxon>Amphibia</taxon>
        <taxon>Batrachia</taxon>
        <taxon>Anura</taxon>
        <taxon>Neobatrachia</taxon>
        <taxon>Ranoidea</taxon>
        <taxon>Ranidae</taxon>
        <taxon>Lithobates</taxon>
    </lineage>
</organism>